<protein>
    <recommendedName>
        <fullName evidence="1">Protein SprT</fullName>
    </recommendedName>
</protein>
<evidence type="ECO:0000255" key="1">
    <source>
        <dbReference type="HAMAP-Rule" id="MF_00746"/>
    </source>
</evidence>
<feature type="chain" id="PRO_1000133245" description="Protein SprT">
    <location>
        <begin position="1"/>
        <end position="168"/>
    </location>
</feature>
<feature type="domain" description="SprT-like" evidence="1">
    <location>
        <begin position="20"/>
        <end position="166"/>
    </location>
</feature>
<feature type="active site" evidence="1">
    <location>
        <position position="79"/>
    </location>
</feature>
<feature type="binding site" evidence="1">
    <location>
        <position position="78"/>
    </location>
    <ligand>
        <name>Zn(2+)</name>
        <dbReference type="ChEBI" id="CHEBI:29105"/>
    </ligand>
</feature>
<feature type="binding site" evidence="1">
    <location>
        <position position="82"/>
    </location>
    <ligand>
        <name>Zn(2+)</name>
        <dbReference type="ChEBI" id="CHEBI:29105"/>
    </ligand>
</feature>
<name>SPRT_PROMH</name>
<proteinExistence type="inferred from homology"/>
<reference key="1">
    <citation type="journal article" date="2008" name="J. Bacteriol.">
        <title>Complete genome sequence of uropathogenic Proteus mirabilis, a master of both adherence and motility.</title>
        <authorList>
            <person name="Pearson M.M."/>
            <person name="Sebaihia M."/>
            <person name="Churcher C."/>
            <person name="Quail M.A."/>
            <person name="Seshasayee A.S."/>
            <person name="Luscombe N.M."/>
            <person name="Abdellah Z."/>
            <person name="Arrosmith C."/>
            <person name="Atkin B."/>
            <person name="Chillingworth T."/>
            <person name="Hauser H."/>
            <person name="Jagels K."/>
            <person name="Moule S."/>
            <person name="Mungall K."/>
            <person name="Norbertczak H."/>
            <person name="Rabbinowitsch E."/>
            <person name="Walker D."/>
            <person name="Whithead S."/>
            <person name="Thomson N.R."/>
            <person name="Rather P.N."/>
            <person name="Parkhill J."/>
            <person name="Mobley H.L.T."/>
        </authorList>
    </citation>
    <scope>NUCLEOTIDE SEQUENCE [LARGE SCALE GENOMIC DNA]</scope>
    <source>
        <strain>HI4320</strain>
    </source>
</reference>
<comment type="cofactor">
    <cofactor evidence="1">
        <name>Zn(2+)</name>
        <dbReference type="ChEBI" id="CHEBI:29105"/>
    </cofactor>
    <text evidence="1">Binds 1 zinc ion.</text>
</comment>
<comment type="subcellular location">
    <subcellularLocation>
        <location evidence="1">Cytoplasm</location>
    </subcellularLocation>
</comment>
<comment type="similarity">
    <text evidence="1">Belongs to the SprT family.</text>
</comment>
<accession>B4F1B5</accession>
<dbReference type="EMBL" id="AM942759">
    <property type="protein sequence ID" value="CAR44204.1"/>
    <property type="molecule type" value="Genomic_DNA"/>
</dbReference>
<dbReference type="EnsemblBacteria" id="CAR44204">
    <property type="protein sequence ID" value="CAR44204"/>
    <property type="gene ID" value="PMI2105"/>
</dbReference>
<dbReference type="KEGG" id="pmr:PMI2105"/>
<dbReference type="eggNOG" id="COG3091">
    <property type="taxonomic scope" value="Bacteria"/>
</dbReference>
<dbReference type="HOGENOM" id="CLU_113336_0_1_6"/>
<dbReference type="Proteomes" id="UP000008319">
    <property type="component" value="Chromosome"/>
</dbReference>
<dbReference type="GO" id="GO:0005737">
    <property type="term" value="C:cytoplasm"/>
    <property type="evidence" value="ECO:0007669"/>
    <property type="project" value="UniProtKB-SubCell"/>
</dbReference>
<dbReference type="GO" id="GO:0008270">
    <property type="term" value="F:zinc ion binding"/>
    <property type="evidence" value="ECO:0007669"/>
    <property type="project" value="UniProtKB-UniRule"/>
</dbReference>
<dbReference type="GO" id="GO:0006950">
    <property type="term" value="P:response to stress"/>
    <property type="evidence" value="ECO:0007669"/>
    <property type="project" value="UniProtKB-ARBA"/>
</dbReference>
<dbReference type="Gene3D" id="3.30.2010.10">
    <property type="entry name" value="Metalloproteases ('zincins'), catalytic domain"/>
    <property type="match status" value="1"/>
</dbReference>
<dbReference type="HAMAP" id="MF_00746">
    <property type="entry name" value="SprT"/>
    <property type="match status" value="1"/>
</dbReference>
<dbReference type="InterPro" id="IPR006640">
    <property type="entry name" value="SprT-like_domain"/>
</dbReference>
<dbReference type="InterPro" id="IPR023483">
    <property type="entry name" value="Uncharacterised_SprT"/>
</dbReference>
<dbReference type="NCBIfam" id="NF003421">
    <property type="entry name" value="PRK04860.1"/>
    <property type="match status" value="1"/>
</dbReference>
<dbReference type="PANTHER" id="PTHR38773">
    <property type="entry name" value="PROTEIN SPRT"/>
    <property type="match status" value="1"/>
</dbReference>
<dbReference type="PANTHER" id="PTHR38773:SF1">
    <property type="entry name" value="PROTEIN SPRT"/>
    <property type="match status" value="1"/>
</dbReference>
<dbReference type="Pfam" id="PF10263">
    <property type="entry name" value="SprT-like"/>
    <property type="match status" value="1"/>
</dbReference>
<dbReference type="SMART" id="SM00731">
    <property type="entry name" value="SprT"/>
    <property type="match status" value="1"/>
</dbReference>
<dbReference type="PROSITE" id="PS00142">
    <property type="entry name" value="ZINC_PROTEASE"/>
    <property type="match status" value="1"/>
</dbReference>
<keyword id="KW-0963">Cytoplasm</keyword>
<keyword id="KW-0479">Metal-binding</keyword>
<keyword id="KW-1185">Reference proteome</keyword>
<keyword id="KW-0862">Zinc</keyword>
<organism>
    <name type="scientific">Proteus mirabilis (strain HI4320)</name>
    <dbReference type="NCBI Taxonomy" id="529507"/>
    <lineage>
        <taxon>Bacteria</taxon>
        <taxon>Pseudomonadati</taxon>
        <taxon>Pseudomonadota</taxon>
        <taxon>Gammaproteobacteria</taxon>
        <taxon>Enterobacterales</taxon>
        <taxon>Morganellaceae</taxon>
        <taxon>Proteus</taxon>
    </lineage>
</organism>
<gene>
    <name evidence="1" type="primary">sprT</name>
    <name type="ordered locus">PMI2105</name>
</gene>
<sequence length="168" mass="19838">MKTVRVPIALVQSVMRTLREKLQQANKYLNTDYPEPTLQYNQRGTIAGSAYYANWEIRLNPTLLIENKQNFIEEVIPHELAHLLVSRHFGRVAPHGKEWKWMMETVLQVSAKRTHHFDISNVTAKTFSYACRCQEIHQLTLRRHNKVQRGETQYRCRHCQAILQLIKE</sequence>